<gene>
    <name evidence="2" type="primary">deoD2</name>
    <name type="ordered locus">VF_A0402</name>
</gene>
<proteinExistence type="inferred from homology"/>
<protein>
    <recommendedName>
        <fullName evidence="2">Purine nucleoside phosphorylase DeoD-type 2</fullName>
        <shortName evidence="2">PNP 2</shortName>
        <ecNumber evidence="2">2.4.2.1</ecNumber>
    </recommendedName>
</protein>
<sequence length="236" mass="25511">MATPHINAQAGDFAETVLMPGDPLRAKFIAENFLEDVKQVCDVRNMFGYTGTYKGKKVSVMGHGMGIPSCCIYVHELIAEYGVKNVIRVGSCGAVHDDVKLMDVVIGMGASTDSKVNRIRFNNHDFAAIADFGLLETAVGQARELNVPVKVGNVFSADLFYSPEADLFDKMEKLGILGVDMEAAGIYGVAADLGAKALTILTVSDHIKRGEKLSSEDRQKSFNDMMTVALETAIKL</sequence>
<comment type="function">
    <text evidence="2">Catalyzes the reversible phosphorolytic breakdown of the N-glycosidic bond in the beta-(deoxy)ribonucleoside molecules, with the formation of the corresponding free purine bases and pentose-1-phosphate.</text>
</comment>
<comment type="catalytic activity">
    <reaction evidence="2">
        <text>a purine D-ribonucleoside + phosphate = a purine nucleobase + alpha-D-ribose 1-phosphate</text>
        <dbReference type="Rhea" id="RHEA:19805"/>
        <dbReference type="ChEBI" id="CHEBI:26386"/>
        <dbReference type="ChEBI" id="CHEBI:43474"/>
        <dbReference type="ChEBI" id="CHEBI:57720"/>
        <dbReference type="ChEBI" id="CHEBI:142355"/>
        <dbReference type="EC" id="2.4.2.1"/>
    </reaction>
</comment>
<comment type="catalytic activity">
    <reaction evidence="2">
        <text>a purine 2'-deoxy-D-ribonucleoside + phosphate = a purine nucleobase + 2-deoxy-alpha-D-ribose 1-phosphate</text>
        <dbReference type="Rhea" id="RHEA:36431"/>
        <dbReference type="ChEBI" id="CHEBI:26386"/>
        <dbReference type="ChEBI" id="CHEBI:43474"/>
        <dbReference type="ChEBI" id="CHEBI:57259"/>
        <dbReference type="ChEBI" id="CHEBI:142361"/>
        <dbReference type="EC" id="2.4.2.1"/>
    </reaction>
</comment>
<comment type="subunit">
    <text evidence="2">Homohexamer; trimer of homodimers.</text>
</comment>
<comment type="similarity">
    <text evidence="2">Belongs to the PNP/UDP phosphorylase family.</text>
</comment>
<feature type="chain" id="PRO_0000063172" description="Purine nucleoside phosphorylase DeoD-type 2">
    <location>
        <begin position="1"/>
        <end position="236"/>
    </location>
</feature>
<feature type="active site" description="Proton donor" evidence="2">
    <location>
        <position position="205"/>
    </location>
</feature>
<feature type="binding site" evidence="1">
    <location>
        <position position="5"/>
    </location>
    <ligand>
        <name>a purine D-ribonucleoside</name>
        <dbReference type="ChEBI" id="CHEBI:142355"/>
        <note>ligand shared between dimeric partners</note>
    </ligand>
</feature>
<feature type="binding site" description="in other chain" evidence="1">
    <location>
        <position position="21"/>
    </location>
    <ligand>
        <name>phosphate</name>
        <dbReference type="ChEBI" id="CHEBI:43474"/>
        <note>ligand shared between dimeric partners</note>
    </ligand>
</feature>
<feature type="binding site" description="in other chain" evidence="1">
    <location>
        <position position="25"/>
    </location>
    <ligand>
        <name>phosphate</name>
        <dbReference type="ChEBI" id="CHEBI:43474"/>
        <note>ligand shared between dimeric partners</note>
    </ligand>
</feature>
<feature type="binding site" evidence="1">
    <location>
        <position position="44"/>
    </location>
    <ligand>
        <name>phosphate</name>
        <dbReference type="ChEBI" id="CHEBI:43474"/>
        <note>ligand shared between dimeric partners</note>
    </ligand>
</feature>
<feature type="binding site" description="in other chain" evidence="1">
    <location>
        <begin position="88"/>
        <end position="91"/>
    </location>
    <ligand>
        <name>phosphate</name>
        <dbReference type="ChEBI" id="CHEBI:43474"/>
        <note>ligand shared between dimeric partners</note>
    </ligand>
</feature>
<feature type="binding site" description="in other chain" evidence="1">
    <location>
        <begin position="180"/>
        <end position="182"/>
    </location>
    <ligand>
        <name>a purine D-ribonucleoside</name>
        <dbReference type="ChEBI" id="CHEBI:142355"/>
        <note>ligand shared between dimeric partners</note>
    </ligand>
</feature>
<feature type="binding site" description="in other chain" evidence="1">
    <location>
        <begin position="204"/>
        <end position="205"/>
    </location>
    <ligand>
        <name>a purine D-ribonucleoside</name>
        <dbReference type="ChEBI" id="CHEBI:142355"/>
        <note>ligand shared between dimeric partners</note>
    </ligand>
</feature>
<feature type="site" description="Important for catalytic activity" evidence="2">
    <location>
        <position position="218"/>
    </location>
</feature>
<accession>Q5E0H4</accession>
<evidence type="ECO:0000250" key="1">
    <source>
        <dbReference type="UniProtKB" id="P50389"/>
    </source>
</evidence>
<evidence type="ECO:0000255" key="2">
    <source>
        <dbReference type="HAMAP-Rule" id="MF_01627"/>
    </source>
</evidence>
<organism>
    <name type="scientific">Aliivibrio fischeri (strain ATCC 700601 / ES114)</name>
    <name type="common">Vibrio fischeri</name>
    <dbReference type="NCBI Taxonomy" id="312309"/>
    <lineage>
        <taxon>Bacteria</taxon>
        <taxon>Pseudomonadati</taxon>
        <taxon>Pseudomonadota</taxon>
        <taxon>Gammaproteobacteria</taxon>
        <taxon>Vibrionales</taxon>
        <taxon>Vibrionaceae</taxon>
        <taxon>Aliivibrio</taxon>
    </lineage>
</organism>
<dbReference type="EC" id="2.4.2.1" evidence="2"/>
<dbReference type="EMBL" id="CP000021">
    <property type="protein sequence ID" value="AAW87472.1"/>
    <property type="molecule type" value="Genomic_DNA"/>
</dbReference>
<dbReference type="RefSeq" id="YP_206360.1">
    <property type="nucleotide sequence ID" value="NC_006841.2"/>
</dbReference>
<dbReference type="SMR" id="Q5E0H4"/>
<dbReference type="STRING" id="312309.VF_A0402"/>
<dbReference type="EnsemblBacteria" id="AAW87472">
    <property type="protein sequence ID" value="AAW87472"/>
    <property type="gene ID" value="VF_A0402"/>
</dbReference>
<dbReference type="GeneID" id="54165719"/>
<dbReference type="KEGG" id="vfi:VF_A0402"/>
<dbReference type="PATRIC" id="fig|312309.11.peg.3005"/>
<dbReference type="eggNOG" id="COG0813">
    <property type="taxonomic scope" value="Bacteria"/>
</dbReference>
<dbReference type="HOGENOM" id="CLU_068457_2_0_6"/>
<dbReference type="OrthoDB" id="9782889at2"/>
<dbReference type="Proteomes" id="UP000000537">
    <property type="component" value="Chromosome II"/>
</dbReference>
<dbReference type="GO" id="GO:0005829">
    <property type="term" value="C:cytosol"/>
    <property type="evidence" value="ECO:0007669"/>
    <property type="project" value="TreeGrafter"/>
</dbReference>
<dbReference type="GO" id="GO:0004731">
    <property type="term" value="F:purine-nucleoside phosphorylase activity"/>
    <property type="evidence" value="ECO:0007669"/>
    <property type="project" value="UniProtKB-UniRule"/>
</dbReference>
<dbReference type="GO" id="GO:0006152">
    <property type="term" value="P:purine nucleoside catabolic process"/>
    <property type="evidence" value="ECO:0007669"/>
    <property type="project" value="TreeGrafter"/>
</dbReference>
<dbReference type="CDD" id="cd09006">
    <property type="entry name" value="PNP_EcPNPI-like"/>
    <property type="match status" value="1"/>
</dbReference>
<dbReference type="Gene3D" id="3.40.50.1580">
    <property type="entry name" value="Nucleoside phosphorylase domain"/>
    <property type="match status" value="1"/>
</dbReference>
<dbReference type="HAMAP" id="MF_01627">
    <property type="entry name" value="Pur_nucleosid_phosp"/>
    <property type="match status" value="1"/>
</dbReference>
<dbReference type="InterPro" id="IPR004402">
    <property type="entry name" value="DeoD-type"/>
</dbReference>
<dbReference type="InterPro" id="IPR000845">
    <property type="entry name" value="Nucleoside_phosphorylase_d"/>
</dbReference>
<dbReference type="InterPro" id="IPR035994">
    <property type="entry name" value="Nucleoside_phosphorylase_sf"/>
</dbReference>
<dbReference type="NCBIfam" id="TIGR00107">
    <property type="entry name" value="deoD"/>
    <property type="match status" value="1"/>
</dbReference>
<dbReference type="NCBIfam" id="NF004489">
    <property type="entry name" value="PRK05819.1"/>
    <property type="match status" value="1"/>
</dbReference>
<dbReference type="NCBIfam" id="NF009914">
    <property type="entry name" value="PRK13374.1"/>
    <property type="match status" value="1"/>
</dbReference>
<dbReference type="PANTHER" id="PTHR43691:SF11">
    <property type="entry name" value="FI09636P-RELATED"/>
    <property type="match status" value="1"/>
</dbReference>
<dbReference type="PANTHER" id="PTHR43691">
    <property type="entry name" value="URIDINE PHOSPHORYLASE"/>
    <property type="match status" value="1"/>
</dbReference>
<dbReference type="Pfam" id="PF01048">
    <property type="entry name" value="PNP_UDP_1"/>
    <property type="match status" value="1"/>
</dbReference>
<dbReference type="SUPFAM" id="SSF53167">
    <property type="entry name" value="Purine and uridine phosphorylases"/>
    <property type="match status" value="1"/>
</dbReference>
<reference key="1">
    <citation type="journal article" date="2005" name="Proc. Natl. Acad. Sci. U.S.A.">
        <title>Complete genome sequence of Vibrio fischeri: a symbiotic bacterium with pathogenic congeners.</title>
        <authorList>
            <person name="Ruby E.G."/>
            <person name="Urbanowski M."/>
            <person name="Campbell J."/>
            <person name="Dunn A."/>
            <person name="Faini M."/>
            <person name="Gunsalus R."/>
            <person name="Lostroh P."/>
            <person name="Lupp C."/>
            <person name="McCann J."/>
            <person name="Millikan D."/>
            <person name="Schaefer A."/>
            <person name="Stabb E."/>
            <person name="Stevens A."/>
            <person name="Visick K."/>
            <person name="Whistler C."/>
            <person name="Greenberg E.P."/>
        </authorList>
    </citation>
    <scope>NUCLEOTIDE SEQUENCE [LARGE SCALE GENOMIC DNA]</scope>
    <source>
        <strain>ATCC 700601 / ES114</strain>
    </source>
</reference>
<name>DEOD2_ALIF1</name>
<keyword id="KW-0328">Glycosyltransferase</keyword>
<keyword id="KW-1185">Reference proteome</keyword>
<keyword id="KW-0808">Transferase</keyword>